<sequence>MKKKALLPLFLGIMVFLAGCDYSKPEKRSGFFYNTFVDPMKNVLDWLGNNLLNDNYGLAIIILVLVIRIILLPFMLSNYKNSHMMRQKMKVAKPEVEKIQEKVKRARTQEEKMAANQELMQVYKKYDMNPIKSMLGCLPMLIQLPIIMGLYFVLKDQLVDGLFKYPHFLWFDLGRPDIWITIIAGVLYFIQAYVSSKTMPDEQRQMGYMMMVISPIMIIWISLSSASALGLYWSVSAAFLVVQTHFANIYYEKVAKKEVQPFIEAYEREHNGGSNKKGKNTQVVSKKKKK</sequence>
<name>YIDC_STAAB</name>
<protein>
    <recommendedName>
        <fullName evidence="1">Membrane protein insertase YidC</fullName>
    </recommendedName>
    <alternativeName>
        <fullName evidence="1">Foldase YidC</fullName>
    </alternativeName>
    <alternativeName>
        <fullName evidence="1">Membrane integrase YidC</fullName>
    </alternativeName>
    <alternativeName>
        <fullName evidence="1">Membrane protein YidC</fullName>
    </alternativeName>
</protein>
<evidence type="ECO:0000255" key="1">
    <source>
        <dbReference type="HAMAP-Rule" id="MF_01811"/>
    </source>
</evidence>
<evidence type="ECO:0000256" key="2">
    <source>
        <dbReference type="SAM" id="MobiDB-lite"/>
    </source>
</evidence>
<reference key="1">
    <citation type="journal article" date="2007" name="PLoS ONE">
        <title>Molecular correlates of host specialization in Staphylococcus aureus.</title>
        <authorList>
            <person name="Herron-Olson L."/>
            <person name="Fitzgerald J.R."/>
            <person name="Musser J.M."/>
            <person name="Kapur V."/>
        </authorList>
    </citation>
    <scope>NUCLEOTIDE SEQUENCE [LARGE SCALE GENOMIC DNA]</scope>
    <source>
        <strain>bovine RF122 / ET3-1</strain>
    </source>
</reference>
<proteinExistence type="inferred from homology"/>
<feature type="signal peptide" evidence="1">
    <location>
        <begin position="1"/>
        <end position="19"/>
    </location>
</feature>
<feature type="chain" id="PRO_1000088270" description="Membrane protein insertase YidC">
    <location>
        <begin position="20"/>
        <end position="290"/>
    </location>
</feature>
<feature type="transmembrane region" description="Helical" evidence="1">
    <location>
        <begin position="56"/>
        <end position="76"/>
    </location>
</feature>
<feature type="transmembrane region" description="Helical" evidence="1">
    <location>
        <begin position="134"/>
        <end position="154"/>
    </location>
</feature>
<feature type="transmembrane region" description="Helical" evidence="1">
    <location>
        <begin position="176"/>
        <end position="196"/>
    </location>
</feature>
<feature type="transmembrane region" description="Helical" evidence="1">
    <location>
        <begin position="207"/>
        <end position="224"/>
    </location>
</feature>
<feature type="transmembrane region" description="Helical" evidence="1">
    <location>
        <begin position="229"/>
        <end position="251"/>
    </location>
</feature>
<feature type="region of interest" description="Disordered" evidence="2">
    <location>
        <begin position="270"/>
        <end position="290"/>
    </location>
</feature>
<feature type="lipid moiety-binding region" description="N-palmitoyl cysteine" evidence="1">
    <location>
        <position position="20"/>
    </location>
</feature>
<feature type="lipid moiety-binding region" description="S-diacylglycerol cysteine" evidence="1">
    <location>
        <position position="20"/>
    </location>
</feature>
<organism>
    <name type="scientific">Staphylococcus aureus (strain bovine RF122 / ET3-1)</name>
    <dbReference type="NCBI Taxonomy" id="273036"/>
    <lineage>
        <taxon>Bacteria</taxon>
        <taxon>Bacillati</taxon>
        <taxon>Bacillota</taxon>
        <taxon>Bacilli</taxon>
        <taxon>Bacillales</taxon>
        <taxon>Staphylococcaceae</taxon>
        <taxon>Staphylococcus</taxon>
    </lineage>
</organism>
<keyword id="KW-1003">Cell membrane</keyword>
<keyword id="KW-0143">Chaperone</keyword>
<keyword id="KW-0449">Lipoprotein</keyword>
<keyword id="KW-0472">Membrane</keyword>
<keyword id="KW-0564">Palmitate</keyword>
<keyword id="KW-0653">Protein transport</keyword>
<keyword id="KW-0732">Signal</keyword>
<keyword id="KW-0812">Transmembrane</keyword>
<keyword id="KW-1133">Transmembrane helix</keyword>
<keyword id="KW-0813">Transport</keyword>
<dbReference type="EMBL" id="AJ938182">
    <property type="protein sequence ID" value="CAI81663.1"/>
    <property type="molecule type" value="Genomic_DNA"/>
</dbReference>
<dbReference type="RefSeq" id="WP_000725802.1">
    <property type="nucleotide sequence ID" value="NC_007622.1"/>
</dbReference>
<dbReference type="SMR" id="Q2YUI9"/>
<dbReference type="KEGG" id="sab:SAB1974c"/>
<dbReference type="HOGENOM" id="CLU_036138_5_2_9"/>
<dbReference type="GO" id="GO:0005886">
    <property type="term" value="C:plasma membrane"/>
    <property type="evidence" value="ECO:0007669"/>
    <property type="project" value="UniProtKB-SubCell"/>
</dbReference>
<dbReference type="GO" id="GO:0032977">
    <property type="term" value="F:membrane insertase activity"/>
    <property type="evidence" value="ECO:0007669"/>
    <property type="project" value="InterPro"/>
</dbReference>
<dbReference type="GO" id="GO:0051205">
    <property type="term" value="P:protein insertion into membrane"/>
    <property type="evidence" value="ECO:0007669"/>
    <property type="project" value="TreeGrafter"/>
</dbReference>
<dbReference type="GO" id="GO:0015031">
    <property type="term" value="P:protein transport"/>
    <property type="evidence" value="ECO:0007669"/>
    <property type="project" value="UniProtKB-KW"/>
</dbReference>
<dbReference type="CDD" id="cd20070">
    <property type="entry name" value="5TM_YidC_Alb3"/>
    <property type="match status" value="1"/>
</dbReference>
<dbReference type="HAMAP" id="MF_01811">
    <property type="entry name" value="YidC_type2"/>
    <property type="match status" value="1"/>
</dbReference>
<dbReference type="InterPro" id="IPR001708">
    <property type="entry name" value="YidC/ALB3/OXA1/COX18"/>
</dbReference>
<dbReference type="InterPro" id="IPR028055">
    <property type="entry name" value="YidC/Oxa/ALB_C"/>
</dbReference>
<dbReference type="InterPro" id="IPR023060">
    <property type="entry name" value="YidC/YidC1/YidC2_Firmicutes"/>
</dbReference>
<dbReference type="InterPro" id="IPR047196">
    <property type="entry name" value="YidC_ALB_C"/>
</dbReference>
<dbReference type="NCBIfam" id="TIGR03592">
    <property type="entry name" value="yidC_oxa1_cterm"/>
    <property type="match status" value="1"/>
</dbReference>
<dbReference type="PANTHER" id="PTHR12428:SF65">
    <property type="entry name" value="CYTOCHROME C OXIDASE ASSEMBLY PROTEIN COX18, MITOCHONDRIAL"/>
    <property type="match status" value="1"/>
</dbReference>
<dbReference type="PANTHER" id="PTHR12428">
    <property type="entry name" value="OXA1"/>
    <property type="match status" value="1"/>
</dbReference>
<dbReference type="Pfam" id="PF02096">
    <property type="entry name" value="60KD_IMP"/>
    <property type="match status" value="1"/>
</dbReference>
<dbReference type="PRINTS" id="PR00701">
    <property type="entry name" value="60KDINNERMP"/>
</dbReference>
<dbReference type="PROSITE" id="PS51257">
    <property type="entry name" value="PROKAR_LIPOPROTEIN"/>
    <property type="match status" value="1"/>
</dbReference>
<accession>Q2YUI9</accession>
<gene>
    <name evidence="1" type="primary">yidC</name>
    <name type="ordered locus">SAB1974c</name>
</gene>
<comment type="function">
    <text evidence="1">Required for the insertion and/or proper folding and/or complex formation of integral membrane proteins into the membrane. Involved in integration of membrane proteins that insert both dependently and independently of the Sec translocase complex, as well as at least some lipoproteins.</text>
</comment>
<comment type="subcellular location">
    <subcellularLocation>
        <location evidence="1">Cell membrane</location>
        <topology evidence="1">Multi-pass membrane protein</topology>
    </subcellularLocation>
</comment>
<comment type="similarity">
    <text evidence="1">Belongs to the OXA1/ALB3/YidC family. Type 2 subfamily.</text>
</comment>